<comment type="function">
    <text evidence="5 6 7 9 10">Required for the migration of axonal growth-cones and distal tip cells (DTC) along the dorsal-ventral axis of the body wall (PubMed:19169249, PubMed:9473333, PubMed:9685266). Acts cell nonautonomously and independently of the classical daf-4, sma-6 or daf-1 TGFbeta receptor signaling (PubMed:11018016, PubMed:19169249, PubMed:9685266). During axon migration, facilitates long-range repulsive guidance of unc-6/netrin by enhancing unc-5-unc-40 signaling at the expense of unc-5 alone signaling, probably through direct interaction with receptor unc-5 (PubMed:19169249, PubMed:9473333). Involved in cell-cell contact formation in sensory rays in the developing male tail, via a pathway involving plx-2 and mab-20/semaphorin-2A (PubMed:15030761).</text>
</comment>
<comment type="subunit">
    <text evidence="7">Interacts with netrin receptor unc-5; the interaction is direct.</text>
</comment>
<comment type="subcellular location">
    <subcellularLocation>
        <location evidence="7">Secreted</location>
        <location evidence="7">Extracellular space</location>
    </subcellularLocation>
</comment>
<comment type="developmental stage">
    <text evidence="8 10">Expressed first at late gastrulation stage in cells that include descendants of the AB and E lineages (PubMed:9685266). Expression detected in dorsal body wall muscle (BWM) at the 1.5-to 2-fold stage of embryogenesis; also in some of cells in the head, including one ventral muscle (PubMed:27341757, PubMed:9685266). Between 520 min and hatching, expressed in the DA and DB motor neurons, excluding DA8 and DA9 (PubMed:9685266). This pattern of expression persists into adulthood (PubMed:9685266).</text>
</comment>
<comment type="similarity">
    <text evidence="3">Belongs to the TGF-beta family.</text>
</comment>
<name>UN129_CAEEL</name>
<sequence length="407" mass="47339">MRRLPIVLLLSVFSIANCAKVDVDLINETIRDLLHFKSSDPNVTSFHRSSHTLTEHMKNLYENFIDEDSNEDGNLVRAIEPAVGKFEGQEVLVFDVEGFDSHESIMRAELHFYLRRRDSFARRRSRQIRAKSVCVNEYCRQQTLKKIRVGGDENLEEYKVIWDATKSVFDSYHLDAKQAVFRITREHSKMRPYAEMIRKSTPFLVIYSKVNHTLDTVSVMKQTEQTKRKRRDLGNEELREYYNYNSIPLDNDDREPIKRKNGKKNSLSEEISSEDVWQGFGEETSREERERIANEELANDVRVVLLQNKNRCHKEGVLVSLKHFGWDRYVIEPKTIETSFCKGKCAKPMLTSGKASNHAMLQSLFAAEPVCCAPTNLKSLNFWYRDEKGRTVIRNYSKMLIGSCSCL</sequence>
<gene>
    <name evidence="14" type="primary">unc-129</name>
    <name evidence="14" type="ORF">C53D6.2</name>
</gene>
<feature type="signal peptide" evidence="1">
    <location>
        <begin position="1"/>
        <end position="18"/>
    </location>
</feature>
<feature type="chain" id="PRO_0000451997" description="BMP-like protein unc-129" evidence="1">
    <location>
        <begin position="19"/>
        <end position="407"/>
    </location>
</feature>
<feature type="region of interest" description="Disordered" evidence="4">
    <location>
        <begin position="252"/>
        <end position="283"/>
    </location>
</feature>
<feature type="glycosylation site" description="N-linked (GlcNAc...) asparagine" evidence="2">
    <location>
        <position position="27"/>
    </location>
</feature>
<feature type="glycosylation site" description="N-linked (GlcNAc...) asparagine" evidence="2">
    <location>
        <position position="42"/>
    </location>
</feature>
<feature type="glycosylation site" description="N-linked (GlcNAc...) asparagine" evidence="2">
    <location>
        <position position="211"/>
    </location>
</feature>
<feature type="glycosylation site" description="N-linked (GlcNAc...) asparagine" evidence="2">
    <location>
        <position position="395"/>
    </location>
</feature>
<feature type="mutagenesis site" description="In ev566; axon guidance defects, but at a lower frequency than in ev557 or ev554 mutants." evidence="10">
    <original>D</original>
    <variation>N</variation>
    <location>
        <position position="163"/>
    </location>
</feature>
<feature type="mutagenesis site" description="In ev557; axon guidance defects." evidence="10">
    <location>
        <begin position="242"/>
        <end position="407"/>
    </location>
</feature>
<feature type="mutagenesis site" description="In ev554; uncoordinated movement defects whereby animals exhibit a kink in the normal wavelike motion during backwards movements. Axon guidance defects. The axons of DD and VD motorneurons do not reach the dorsal cord and instead extend along longitudinal paths at aberant axial levels. The axons of DA and DB motorneurons do not grow to their targets in the dorsal cord and instead extend along subdorsal longitudinal paths. Some motorneurons display excessive branching and disorganized trajectories. Does not have distal tip cell (DTC) migration defects and partially suppresses DTC migration defects when on an unc-130 mutant background. Similar frequency of DA and DB motor axon guidance defects on the unc-130 or unc-40 mutant backgrounds. Exhibit similar locomotion defects on a daf-4 mutant background. Enhances ray fusion defects on an efn-4 mutant background. Suppresses the anterior touch neuron axon guidance defects in an unc-5 over-expression mutant background." evidence="5 6 7 9 10">
    <location>
        <begin position="327"/>
        <end position="407"/>
    </location>
</feature>
<keyword id="KW-0325">Glycoprotein</keyword>
<keyword id="KW-0339">Growth factor</keyword>
<keyword id="KW-0524">Neurogenesis</keyword>
<keyword id="KW-1185">Reference proteome</keyword>
<keyword id="KW-0964">Secreted</keyword>
<keyword id="KW-0732">Signal</keyword>
<proteinExistence type="evidence at protein level"/>
<evidence type="ECO:0000255" key="1"/>
<evidence type="ECO:0000255" key="2">
    <source>
        <dbReference type="PROSITE-ProRule" id="PRU00498"/>
    </source>
</evidence>
<evidence type="ECO:0000255" key="3">
    <source>
        <dbReference type="RuleBase" id="RU000354"/>
    </source>
</evidence>
<evidence type="ECO:0000256" key="4">
    <source>
        <dbReference type="SAM" id="MobiDB-lite"/>
    </source>
</evidence>
<evidence type="ECO:0000269" key="5">
    <source>
    </source>
</evidence>
<evidence type="ECO:0000269" key="6">
    <source>
    </source>
</evidence>
<evidence type="ECO:0000269" key="7">
    <source>
    </source>
</evidence>
<evidence type="ECO:0000269" key="8">
    <source>
    </source>
</evidence>
<evidence type="ECO:0000269" key="9">
    <source>
    </source>
</evidence>
<evidence type="ECO:0000269" key="10">
    <source>
    </source>
</evidence>
<evidence type="ECO:0000305" key="11"/>
<evidence type="ECO:0000312" key="12">
    <source>
        <dbReference type="EMBL" id="AAC48376.1"/>
    </source>
</evidence>
<evidence type="ECO:0000312" key="13">
    <source>
        <dbReference type="Proteomes" id="UP000001940"/>
    </source>
</evidence>
<evidence type="ECO:0000312" key="14">
    <source>
        <dbReference type="WormBase" id="C53D6.2"/>
    </source>
</evidence>
<protein>
    <recommendedName>
        <fullName evidence="11">BMP-like protein unc-129</fullName>
    </recommendedName>
    <alternativeName>
        <fullName evidence="14">Uncoordinated protein 129</fullName>
    </alternativeName>
</protein>
<dbReference type="EMBL" id="AF029887">
    <property type="protein sequence ID" value="AAC48376.1"/>
    <property type="molecule type" value="mRNA"/>
</dbReference>
<dbReference type="EMBL" id="BX284604">
    <property type="protein sequence ID" value="CAB61007.1"/>
    <property type="molecule type" value="Genomic_DNA"/>
</dbReference>
<dbReference type="PIR" id="T37242">
    <property type="entry name" value="T37242"/>
</dbReference>
<dbReference type="RefSeq" id="NP_501566.1">
    <property type="nucleotide sequence ID" value="NM_069165.8"/>
</dbReference>
<dbReference type="FunCoup" id="G5EBY8">
    <property type="interactions" value="12"/>
</dbReference>
<dbReference type="IntAct" id="G5EBY8">
    <property type="interactions" value="1"/>
</dbReference>
<dbReference type="STRING" id="6239.C53D6.2.2"/>
<dbReference type="GlyCosmos" id="G5EBY8">
    <property type="glycosylation" value="4 sites, No reported glycans"/>
</dbReference>
<dbReference type="PaxDb" id="6239-C53D6.2"/>
<dbReference type="PeptideAtlas" id="G5EBY8"/>
<dbReference type="EnsemblMetazoa" id="C53D6.2.1">
    <property type="protein sequence ID" value="C53D6.2.1"/>
    <property type="gene ID" value="WBGene00006852"/>
</dbReference>
<dbReference type="GeneID" id="177719"/>
<dbReference type="KEGG" id="cel:CELE_C53D6.2"/>
<dbReference type="AGR" id="WB:WBGene00006852"/>
<dbReference type="CTD" id="177719"/>
<dbReference type="WormBase" id="C53D6.2">
    <property type="protein sequence ID" value="CE24863"/>
    <property type="gene ID" value="WBGene00006852"/>
    <property type="gene designation" value="unc-129"/>
</dbReference>
<dbReference type="eggNOG" id="KOG3900">
    <property type="taxonomic scope" value="Eukaryota"/>
</dbReference>
<dbReference type="GeneTree" id="ENSGT00940000160223"/>
<dbReference type="HOGENOM" id="CLU_055885_0_0_1"/>
<dbReference type="InParanoid" id="G5EBY8"/>
<dbReference type="OMA" id="ITMRAES"/>
<dbReference type="OrthoDB" id="5987191at2759"/>
<dbReference type="PhylomeDB" id="G5EBY8"/>
<dbReference type="Reactome" id="R-CEL-114608">
    <property type="pathway name" value="Platelet degranulation"/>
</dbReference>
<dbReference type="Reactome" id="R-CEL-201451">
    <property type="pathway name" value="Signaling by BMP"/>
</dbReference>
<dbReference type="Reactome" id="R-CEL-2129379">
    <property type="pathway name" value="Molecules associated with elastic fibres"/>
</dbReference>
<dbReference type="Reactome" id="R-CEL-2173788">
    <property type="pathway name" value="Downregulation of TGF-beta receptor signaling"/>
</dbReference>
<dbReference type="Reactome" id="R-CEL-2173789">
    <property type="pathway name" value="TGF-beta receptor signaling activates SMADs"/>
</dbReference>
<dbReference type="Reactome" id="R-CEL-2173791">
    <property type="pathway name" value="TGF-beta receptor signaling in EMT (epithelial to mesenchymal transition)"/>
</dbReference>
<dbReference type="Reactome" id="R-CEL-3000170">
    <property type="pathway name" value="Syndecan interactions"/>
</dbReference>
<dbReference type="Reactome" id="R-CEL-381426">
    <property type="pathway name" value="Regulation of Insulin-like Growth Factor (IGF) transport and uptake by Insulin-like Growth Factor Binding Proteins (IGFBPs)"/>
</dbReference>
<dbReference type="Reactome" id="R-CEL-8941855">
    <property type="pathway name" value="RUNX3 regulates CDKN1A transcription"/>
</dbReference>
<dbReference type="Reactome" id="R-CEL-8941858">
    <property type="pathway name" value="Regulation of RUNX3 expression and activity"/>
</dbReference>
<dbReference type="Reactome" id="R-CEL-8951936">
    <property type="pathway name" value="RUNX3 regulates p14-ARF"/>
</dbReference>
<dbReference type="Reactome" id="R-CEL-8957275">
    <property type="pathway name" value="Post-translational protein phosphorylation"/>
</dbReference>
<dbReference type="Reactome" id="R-CEL-9839389">
    <property type="pathway name" value="TGFBR3 regulates TGF-beta signaling"/>
</dbReference>
<dbReference type="PRO" id="PR:G5EBY8"/>
<dbReference type="Proteomes" id="UP000001940">
    <property type="component" value="Chromosome IV"/>
</dbReference>
<dbReference type="Bgee" id="WBGene00006852">
    <property type="expression patterns" value="Expressed in embryo and 3 other cell types or tissues"/>
</dbReference>
<dbReference type="GO" id="GO:0005576">
    <property type="term" value="C:extracellular region"/>
    <property type="evidence" value="ECO:0000250"/>
    <property type="project" value="WormBase"/>
</dbReference>
<dbReference type="GO" id="GO:0005615">
    <property type="term" value="C:extracellular space"/>
    <property type="evidence" value="ECO:0000318"/>
    <property type="project" value="GO_Central"/>
</dbReference>
<dbReference type="GO" id="GO:0005125">
    <property type="term" value="F:cytokine activity"/>
    <property type="evidence" value="ECO:0000318"/>
    <property type="project" value="GO_Central"/>
</dbReference>
<dbReference type="GO" id="GO:0008083">
    <property type="term" value="F:growth factor activity"/>
    <property type="evidence" value="ECO:0007669"/>
    <property type="project" value="UniProtKB-KW"/>
</dbReference>
<dbReference type="GO" id="GO:0005102">
    <property type="term" value="F:signaling receptor binding"/>
    <property type="evidence" value="ECO:0000353"/>
    <property type="project" value="WormBase"/>
</dbReference>
<dbReference type="GO" id="GO:0005160">
    <property type="term" value="F:transforming growth factor beta receptor binding"/>
    <property type="evidence" value="ECO:0000250"/>
    <property type="project" value="WormBase"/>
</dbReference>
<dbReference type="GO" id="GO:0043057">
    <property type="term" value="P:backward locomotion"/>
    <property type="evidence" value="ECO:0000315"/>
    <property type="project" value="WormBase"/>
</dbReference>
<dbReference type="GO" id="GO:0033563">
    <property type="term" value="P:dorsal/ventral axon guidance"/>
    <property type="evidence" value="ECO:0000315"/>
    <property type="project" value="WormBase"/>
</dbReference>
<dbReference type="GO" id="GO:0040039">
    <property type="term" value="P:inductive cell migration"/>
    <property type="evidence" value="ECO:0000315"/>
    <property type="project" value="WormBase"/>
</dbReference>
<dbReference type="GO" id="GO:0040011">
    <property type="term" value="P:locomotion"/>
    <property type="evidence" value="ECO:0000315"/>
    <property type="project" value="WormBase"/>
</dbReference>
<dbReference type="GO" id="GO:0008045">
    <property type="term" value="P:motor neuron axon guidance"/>
    <property type="evidence" value="ECO:0000315"/>
    <property type="project" value="WormBase"/>
</dbReference>
<dbReference type="GO" id="GO:0045138">
    <property type="term" value="P:nematode male tail tip morphogenesis"/>
    <property type="evidence" value="ECO:0000316"/>
    <property type="project" value="WormBase"/>
</dbReference>
<dbReference type="CDD" id="cd13756">
    <property type="entry name" value="TGF_beta_BMPs_GDFs"/>
    <property type="match status" value="1"/>
</dbReference>
<dbReference type="Gene3D" id="2.10.90.10">
    <property type="entry name" value="Cystine-knot cytokines"/>
    <property type="match status" value="1"/>
</dbReference>
<dbReference type="InterPro" id="IPR029034">
    <property type="entry name" value="Cystine-knot_cytokine"/>
</dbReference>
<dbReference type="InterPro" id="IPR001839">
    <property type="entry name" value="TGF-b_C"/>
</dbReference>
<dbReference type="InterPro" id="IPR015615">
    <property type="entry name" value="TGF-beta-rel"/>
</dbReference>
<dbReference type="PANTHER" id="PTHR11848:SF308">
    <property type="entry name" value="BMP-LIKE PROTEIN UNC-129"/>
    <property type="match status" value="1"/>
</dbReference>
<dbReference type="PANTHER" id="PTHR11848">
    <property type="entry name" value="TGF-BETA FAMILY"/>
    <property type="match status" value="1"/>
</dbReference>
<dbReference type="Pfam" id="PF00019">
    <property type="entry name" value="TGF_beta"/>
    <property type="match status" value="1"/>
</dbReference>
<dbReference type="SMART" id="SM00204">
    <property type="entry name" value="TGFB"/>
    <property type="match status" value="1"/>
</dbReference>
<dbReference type="SUPFAM" id="SSF57501">
    <property type="entry name" value="Cystine-knot cytokines"/>
    <property type="match status" value="1"/>
</dbReference>
<dbReference type="PROSITE" id="PS51362">
    <property type="entry name" value="TGF_BETA_2"/>
    <property type="match status" value="1"/>
</dbReference>
<organism evidence="13">
    <name type="scientific">Caenorhabditis elegans</name>
    <dbReference type="NCBI Taxonomy" id="6239"/>
    <lineage>
        <taxon>Eukaryota</taxon>
        <taxon>Metazoa</taxon>
        <taxon>Ecdysozoa</taxon>
        <taxon>Nematoda</taxon>
        <taxon>Chromadorea</taxon>
        <taxon>Rhabditida</taxon>
        <taxon>Rhabditina</taxon>
        <taxon>Rhabditomorpha</taxon>
        <taxon>Rhabditoidea</taxon>
        <taxon>Rhabditidae</taxon>
        <taxon>Peloderinae</taxon>
        <taxon>Caenorhabditis</taxon>
    </lineage>
</organism>
<accession>G5EBY8</accession>
<reference evidence="12" key="1">
    <citation type="journal article" date="1998" name="Science">
        <title>Pioneer axon guidance by UNC-129, a C. elegans TGF-beta.</title>
        <authorList>
            <person name="Colavita A."/>
            <person name="Krishna S."/>
            <person name="Zheng H."/>
            <person name="Padgett R.W."/>
            <person name="Culotti J.G."/>
        </authorList>
    </citation>
    <scope>NUCLEOTIDE SEQUENCE [MRNA]</scope>
    <scope>FUNCTION</scope>
    <scope>DEVELOPMENTAL STAGE</scope>
    <scope>MUTAGENESIS OF ASP-163; 242-TYR--LEU-407 AND 327-ASP--LEU-407</scope>
    <source>
        <strain evidence="12">Bristol N2</strain>
    </source>
</reference>
<reference evidence="13" key="2">
    <citation type="journal article" date="1998" name="Science">
        <title>Genome sequence of the nematode C. elegans: a platform for investigating biology.</title>
        <authorList>
            <consortium name="The C. elegans sequencing consortium"/>
        </authorList>
    </citation>
    <scope>NUCLEOTIDE SEQUENCE [LARGE SCALE GENOMIC DNA]</scope>
    <source>
        <strain evidence="13">Bristol N2</strain>
    </source>
</reference>
<reference key="3">
    <citation type="journal article" date="1998" name="Dev. Biol.">
        <title>Suppressors of ectopic UNC-5 growth cone steering identify eight genes involved in axon guidance in Caenorhabditis elegans.</title>
        <authorList>
            <person name="Colavita A."/>
            <person name="Culotti J.G."/>
        </authorList>
    </citation>
    <scope>FUNCTION</scope>
    <scope>MUTAGENESIS OF 327-ASP--LEU-407</scope>
</reference>
<reference evidence="11" key="4">
    <citation type="journal article" date="2000" name="Genes Dev.">
        <title>The forkhead transcription factor UNC-130 is required for the graded spatial expression of the UNC-129 TGF-beta guidance factor in C. elegans.</title>
        <authorList>
            <person name="Nash B."/>
            <person name="Colavita A."/>
            <person name="Zheng H."/>
            <person name="Roy P.J."/>
            <person name="Culotti J.G."/>
        </authorList>
    </citation>
    <scope>FUNCTION</scope>
    <scope>MUTAGENESIS OF 327-ASP--LEU-407</scope>
</reference>
<reference evidence="11" key="5">
    <citation type="journal article" date="2004" name="Dev. Cell">
        <title>Integration of semaphorin-2A/MAB-20, ephrin-4, and UNC-129 TGF-beta signaling pathways regulates sorting of distinct sensory rays in C. elegans.</title>
        <authorList>
            <person name="Ikegami R."/>
            <person name="Zheng H."/>
            <person name="Ong S.-H."/>
            <person name="Culotti J.G."/>
        </authorList>
    </citation>
    <scope>FUNCTION</scope>
    <scope>MUTAGENESIS OF 327-ASP--LEU-407</scope>
</reference>
<reference evidence="11" key="6">
    <citation type="journal article" date="2009" name="Nat. Neurosci.">
        <title>UNC-129 regulates the balance between UNC-40 dependent and independent UNC-5 signaling pathways.</title>
        <authorList>
            <person name="MacNeil L.T."/>
            <person name="Hardy W.R."/>
            <person name="Pawson T."/>
            <person name="Wrana J.L."/>
            <person name="Culotti J.G."/>
        </authorList>
    </citation>
    <scope>FUNCTION</scope>
    <scope>INTERACTION WITH UNC-5</scope>
    <scope>SUBCELLULAR LOCATION</scope>
    <scope>MUTAGENESIS OF 327-ASP--LEU-407</scope>
</reference>
<reference evidence="11" key="7">
    <citation type="journal article" date="2016" name="Dev. Biol.">
        <title>Regulation of UNC-130/FOXD-mediated mesodermal patterning in C. elegans.</title>
        <authorList>
            <person name="Kersey R.K."/>
            <person name="Brodigan T.M."/>
            <person name="Fukushige T."/>
            <person name="Krause M.W."/>
        </authorList>
    </citation>
    <scope>DEVELOPMENTAL STAGE</scope>
</reference>